<dbReference type="EC" id="3.5.3.8" evidence="1"/>
<dbReference type="EMBL" id="CP000261">
    <property type="protein sequence ID" value="ABF36863.1"/>
    <property type="status" value="ALT_INIT"/>
    <property type="molecule type" value="Genomic_DNA"/>
</dbReference>
<dbReference type="SMR" id="Q1J9E8"/>
<dbReference type="KEGG" id="spj:MGAS2096_Spy1811"/>
<dbReference type="HOGENOM" id="CLU_039478_2_0_9"/>
<dbReference type="UniPathway" id="UPA00379">
    <property type="reaction ID" value="UER00552"/>
</dbReference>
<dbReference type="GO" id="GO:0008783">
    <property type="term" value="F:agmatinase activity"/>
    <property type="evidence" value="ECO:0007669"/>
    <property type="project" value="TreeGrafter"/>
</dbReference>
<dbReference type="GO" id="GO:0050415">
    <property type="term" value="F:formimidoylglutamase activity"/>
    <property type="evidence" value="ECO:0007669"/>
    <property type="project" value="UniProtKB-UniRule"/>
</dbReference>
<dbReference type="GO" id="GO:0030145">
    <property type="term" value="F:manganese ion binding"/>
    <property type="evidence" value="ECO:0007669"/>
    <property type="project" value="UniProtKB-UniRule"/>
</dbReference>
<dbReference type="GO" id="GO:0019556">
    <property type="term" value="P:L-histidine catabolic process to glutamate and formamide"/>
    <property type="evidence" value="ECO:0007669"/>
    <property type="project" value="UniProtKB-UniPathway"/>
</dbReference>
<dbReference type="GO" id="GO:0019557">
    <property type="term" value="P:L-histidine catabolic process to glutamate and formate"/>
    <property type="evidence" value="ECO:0007669"/>
    <property type="project" value="UniProtKB-UniPathway"/>
</dbReference>
<dbReference type="GO" id="GO:0033389">
    <property type="term" value="P:putrescine biosynthetic process from arginine, via agmatine"/>
    <property type="evidence" value="ECO:0007669"/>
    <property type="project" value="TreeGrafter"/>
</dbReference>
<dbReference type="CDD" id="cd09988">
    <property type="entry name" value="Formimidoylglutamase"/>
    <property type="match status" value="1"/>
</dbReference>
<dbReference type="Gene3D" id="3.40.800.10">
    <property type="entry name" value="Ureohydrolase domain"/>
    <property type="match status" value="1"/>
</dbReference>
<dbReference type="HAMAP" id="MF_00737">
    <property type="entry name" value="Formimidoylglutam"/>
    <property type="match status" value="1"/>
</dbReference>
<dbReference type="InterPro" id="IPR005923">
    <property type="entry name" value="HutG"/>
</dbReference>
<dbReference type="InterPro" id="IPR006035">
    <property type="entry name" value="Ureohydrolase"/>
</dbReference>
<dbReference type="InterPro" id="IPR023696">
    <property type="entry name" value="Ureohydrolase_dom_sf"/>
</dbReference>
<dbReference type="NCBIfam" id="NF010347">
    <property type="entry name" value="PRK13775.1"/>
    <property type="match status" value="1"/>
</dbReference>
<dbReference type="PANTHER" id="PTHR11358">
    <property type="entry name" value="ARGINASE/AGMATINASE"/>
    <property type="match status" value="1"/>
</dbReference>
<dbReference type="PANTHER" id="PTHR11358:SF35">
    <property type="entry name" value="FORMIMIDOYLGLUTAMASE"/>
    <property type="match status" value="1"/>
</dbReference>
<dbReference type="Pfam" id="PF00491">
    <property type="entry name" value="Arginase"/>
    <property type="match status" value="1"/>
</dbReference>
<dbReference type="PIRSF" id="PIRSF036979">
    <property type="entry name" value="Arginase"/>
    <property type="match status" value="1"/>
</dbReference>
<dbReference type="SUPFAM" id="SSF52768">
    <property type="entry name" value="Arginase/deacetylase"/>
    <property type="match status" value="1"/>
</dbReference>
<dbReference type="PROSITE" id="PS51409">
    <property type="entry name" value="ARGINASE_2"/>
    <property type="match status" value="1"/>
</dbReference>
<name>HUTG_STRPB</name>
<reference key="1">
    <citation type="journal article" date="2006" name="Proc. Natl. Acad. Sci. U.S.A.">
        <title>Molecular genetic anatomy of inter- and intraserotype variation in the human bacterial pathogen group A Streptococcus.</title>
        <authorList>
            <person name="Beres S.B."/>
            <person name="Richter E.W."/>
            <person name="Nagiec M.J."/>
            <person name="Sumby P."/>
            <person name="Porcella S.F."/>
            <person name="DeLeo F.R."/>
            <person name="Musser J.M."/>
        </authorList>
    </citation>
    <scope>NUCLEOTIDE SEQUENCE [LARGE SCALE GENOMIC DNA]</scope>
    <source>
        <strain>MGAS2096</strain>
    </source>
</reference>
<protein>
    <recommendedName>
        <fullName evidence="1">Formimidoylglutamase</fullName>
        <ecNumber evidence="1">3.5.3.8</ecNumber>
    </recommendedName>
    <alternativeName>
        <fullName evidence="1">Formiminoglutamase</fullName>
    </alternativeName>
    <alternativeName>
        <fullName evidence="1">Formiminoglutamate hydrolase</fullName>
    </alternativeName>
</protein>
<organism>
    <name type="scientific">Streptococcus pyogenes serotype M12 (strain MGAS2096)</name>
    <dbReference type="NCBI Taxonomy" id="370553"/>
    <lineage>
        <taxon>Bacteria</taxon>
        <taxon>Bacillati</taxon>
        <taxon>Bacillota</taxon>
        <taxon>Bacilli</taxon>
        <taxon>Lactobacillales</taxon>
        <taxon>Streptococcaceae</taxon>
        <taxon>Streptococcus</taxon>
    </lineage>
</organism>
<comment type="function">
    <text evidence="1">Catalyzes the conversion of N-formimidoyl-L-glutamate to L-glutamate and formamide.</text>
</comment>
<comment type="catalytic activity">
    <reaction evidence="1">
        <text>N-formimidoyl-L-glutamate + H2O = formamide + L-glutamate</text>
        <dbReference type="Rhea" id="RHEA:22492"/>
        <dbReference type="ChEBI" id="CHEBI:15377"/>
        <dbReference type="ChEBI" id="CHEBI:16397"/>
        <dbReference type="ChEBI" id="CHEBI:29985"/>
        <dbReference type="ChEBI" id="CHEBI:58928"/>
        <dbReference type="EC" id="3.5.3.8"/>
    </reaction>
</comment>
<comment type="cofactor">
    <cofactor evidence="1">
        <name>Mn(2+)</name>
        <dbReference type="ChEBI" id="CHEBI:29035"/>
    </cofactor>
    <text evidence="1">Binds 2 manganese ions per subunit.</text>
</comment>
<comment type="pathway">
    <text evidence="1">Amino-acid degradation; L-histidine degradation into L-glutamate; L-glutamate from N-formimidoyl-L-glutamate (hydrolase route): step 1/1.</text>
</comment>
<comment type="similarity">
    <text evidence="1">Belongs to the arginase family.</text>
</comment>
<comment type="sequence caution" evidence="2">
    <conflict type="erroneous initiation">
        <sequence resource="EMBL-CDS" id="ABF36863"/>
    </conflict>
</comment>
<proteinExistence type="inferred from homology"/>
<accession>Q1J9E8</accession>
<gene>
    <name evidence="1" type="primary">hutG</name>
    <name type="ordered locus">MGAS2096_Spy1811</name>
</gene>
<sequence>MLEDYYPSTTSYYHGGIDDDLYTAKWGMVMTFLDLNDSSLTPFEGTHFALIGFKSDKGVYINNGRVGAVESPAAIRTQLAKFPWHLGNQVMVYDVGNIDGPNRSLEQLQNSLSKAIKRMCDLNLKPIVLGGGHETAYGHYLGLRQSLSPSDDLAVINMDAHFDLRPYDQTGPNSGTGFRQMFDDAVADKRLFKYFVLGIQEHNNNLFLFDFVAKSKGIQFLTGQDIYQMGHQKVCRAIDRFLEGQERVYLTIDMDCFSVGAAPGVSAIQSLGVDPNLAVLVLQHIAASRKLVGFDVVEVSPPHDIDNHTANLAATFIFYLVQIMAQHS</sequence>
<keyword id="KW-0369">Histidine metabolism</keyword>
<keyword id="KW-0378">Hydrolase</keyword>
<keyword id="KW-0464">Manganese</keyword>
<keyword id="KW-0479">Metal-binding</keyword>
<evidence type="ECO:0000255" key="1">
    <source>
        <dbReference type="HAMAP-Rule" id="MF_00737"/>
    </source>
</evidence>
<evidence type="ECO:0000305" key="2"/>
<feature type="chain" id="PRO_0000258264" description="Formimidoylglutamase">
    <location>
        <begin position="1"/>
        <end position="328"/>
    </location>
</feature>
<feature type="binding site" evidence="1">
    <location>
        <position position="133"/>
    </location>
    <ligand>
        <name>Mn(2+)</name>
        <dbReference type="ChEBI" id="CHEBI:29035"/>
        <label>1</label>
    </ligand>
</feature>
<feature type="binding site" evidence="1">
    <location>
        <position position="159"/>
    </location>
    <ligand>
        <name>Mn(2+)</name>
        <dbReference type="ChEBI" id="CHEBI:29035"/>
        <label>1</label>
    </ligand>
</feature>
<feature type="binding site" evidence="1">
    <location>
        <position position="159"/>
    </location>
    <ligand>
        <name>Mn(2+)</name>
        <dbReference type="ChEBI" id="CHEBI:29035"/>
        <label>2</label>
    </ligand>
</feature>
<feature type="binding site" evidence="1">
    <location>
        <position position="161"/>
    </location>
    <ligand>
        <name>Mn(2+)</name>
        <dbReference type="ChEBI" id="CHEBI:29035"/>
        <label>2</label>
    </ligand>
</feature>
<feature type="binding site" evidence="1">
    <location>
        <position position="163"/>
    </location>
    <ligand>
        <name>Mn(2+)</name>
        <dbReference type="ChEBI" id="CHEBI:29035"/>
        <label>1</label>
    </ligand>
</feature>
<feature type="binding site" evidence="1">
    <location>
        <position position="253"/>
    </location>
    <ligand>
        <name>Mn(2+)</name>
        <dbReference type="ChEBI" id="CHEBI:29035"/>
        <label>1</label>
    </ligand>
</feature>
<feature type="binding site" evidence="1">
    <location>
        <position position="253"/>
    </location>
    <ligand>
        <name>Mn(2+)</name>
        <dbReference type="ChEBI" id="CHEBI:29035"/>
        <label>2</label>
    </ligand>
</feature>
<feature type="binding site" evidence="1">
    <location>
        <position position="255"/>
    </location>
    <ligand>
        <name>Mn(2+)</name>
        <dbReference type="ChEBI" id="CHEBI:29035"/>
        <label>2</label>
    </ligand>
</feature>